<reference key="1">
    <citation type="journal article" date="2007" name="PLoS Genet.">
        <title>Patterns and implications of gene gain and loss in the evolution of Prochlorococcus.</title>
        <authorList>
            <person name="Kettler G.C."/>
            <person name="Martiny A.C."/>
            <person name="Huang K."/>
            <person name="Zucker J."/>
            <person name="Coleman M.L."/>
            <person name="Rodrigue S."/>
            <person name="Chen F."/>
            <person name="Lapidus A."/>
            <person name="Ferriera S."/>
            <person name="Johnson J."/>
            <person name="Steglich C."/>
            <person name="Church G.M."/>
            <person name="Richardson P."/>
            <person name="Chisholm S.W."/>
        </authorList>
    </citation>
    <scope>NUCLEOTIDE SEQUENCE [LARGE SCALE GENOMIC DNA]</scope>
    <source>
        <strain>MIT 9515</strain>
    </source>
</reference>
<comment type="function">
    <text evidence="1">Binds to 23S rRNA. Forms part of two intersubunit bridges in the 70S ribosome.</text>
</comment>
<comment type="subunit">
    <text evidence="1">Part of the 50S ribosomal subunit. Forms a cluster with proteins L3 and L19. In the 70S ribosome, L14 and L19 interact and together make contacts with the 16S rRNA in bridges B5 and B8.</text>
</comment>
<comment type="similarity">
    <text evidence="1">Belongs to the universal ribosomal protein uL14 family.</text>
</comment>
<organism>
    <name type="scientific">Prochlorococcus marinus (strain MIT 9515)</name>
    <dbReference type="NCBI Taxonomy" id="167542"/>
    <lineage>
        <taxon>Bacteria</taxon>
        <taxon>Bacillati</taxon>
        <taxon>Cyanobacteriota</taxon>
        <taxon>Cyanophyceae</taxon>
        <taxon>Synechococcales</taxon>
        <taxon>Prochlorococcaceae</taxon>
        <taxon>Prochlorococcus</taxon>
    </lineage>
</organism>
<proteinExistence type="inferred from homology"/>
<gene>
    <name evidence="1" type="primary">rplN</name>
    <name evidence="1" type="synonym">rpl14</name>
    <name type="ordered locus">P9515_17301</name>
</gene>
<feature type="chain" id="PRO_1000055669" description="Large ribosomal subunit protein uL14">
    <location>
        <begin position="1"/>
        <end position="121"/>
    </location>
</feature>
<protein>
    <recommendedName>
        <fullName evidence="1">Large ribosomal subunit protein uL14</fullName>
    </recommendedName>
    <alternativeName>
        <fullName evidence="2">50S ribosomal protein L14</fullName>
    </alternativeName>
</protein>
<name>RL14_PROM5</name>
<dbReference type="EMBL" id="CP000552">
    <property type="protein sequence ID" value="ABM72937.1"/>
    <property type="molecule type" value="Genomic_DNA"/>
</dbReference>
<dbReference type="RefSeq" id="WP_011133176.1">
    <property type="nucleotide sequence ID" value="NC_008817.1"/>
</dbReference>
<dbReference type="SMR" id="A2BYS6"/>
<dbReference type="STRING" id="167542.P9515_17301"/>
<dbReference type="GeneID" id="60200770"/>
<dbReference type="KEGG" id="pmc:P9515_17301"/>
<dbReference type="eggNOG" id="COG0093">
    <property type="taxonomic scope" value="Bacteria"/>
</dbReference>
<dbReference type="HOGENOM" id="CLU_095071_2_1_3"/>
<dbReference type="OrthoDB" id="9806379at2"/>
<dbReference type="Proteomes" id="UP000001589">
    <property type="component" value="Chromosome"/>
</dbReference>
<dbReference type="GO" id="GO:0022625">
    <property type="term" value="C:cytosolic large ribosomal subunit"/>
    <property type="evidence" value="ECO:0007669"/>
    <property type="project" value="TreeGrafter"/>
</dbReference>
<dbReference type="GO" id="GO:0070180">
    <property type="term" value="F:large ribosomal subunit rRNA binding"/>
    <property type="evidence" value="ECO:0007669"/>
    <property type="project" value="TreeGrafter"/>
</dbReference>
<dbReference type="GO" id="GO:0003735">
    <property type="term" value="F:structural constituent of ribosome"/>
    <property type="evidence" value="ECO:0007669"/>
    <property type="project" value="InterPro"/>
</dbReference>
<dbReference type="GO" id="GO:0006412">
    <property type="term" value="P:translation"/>
    <property type="evidence" value="ECO:0007669"/>
    <property type="project" value="UniProtKB-UniRule"/>
</dbReference>
<dbReference type="CDD" id="cd00337">
    <property type="entry name" value="Ribosomal_uL14"/>
    <property type="match status" value="1"/>
</dbReference>
<dbReference type="FunFam" id="2.40.150.20:FF:000001">
    <property type="entry name" value="50S ribosomal protein L14"/>
    <property type="match status" value="1"/>
</dbReference>
<dbReference type="Gene3D" id="2.40.150.20">
    <property type="entry name" value="Ribosomal protein L14"/>
    <property type="match status" value="1"/>
</dbReference>
<dbReference type="HAMAP" id="MF_01367">
    <property type="entry name" value="Ribosomal_uL14"/>
    <property type="match status" value="1"/>
</dbReference>
<dbReference type="InterPro" id="IPR000218">
    <property type="entry name" value="Ribosomal_uL14"/>
</dbReference>
<dbReference type="InterPro" id="IPR005745">
    <property type="entry name" value="Ribosomal_uL14_bac-type"/>
</dbReference>
<dbReference type="InterPro" id="IPR036853">
    <property type="entry name" value="Ribosomal_uL14_sf"/>
</dbReference>
<dbReference type="NCBIfam" id="TIGR01067">
    <property type="entry name" value="rplN_bact"/>
    <property type="match status" value="1"/>
</dbReference>
<dbReference type="PANTHER" id="PTHR11761">
    <property type="entry name" value="50S/60S RIBOSOMAL PROTEIN L14/L23"/>
    <property type="match status" value="1"/>
</dbReference>
<dbReference type="PANTHER" id="PTHR11761:SF3">
    <property type="entry name" value="LARGE RIBOSOMAL SUBUNIT PROTEIN UL14M"/>
    <property type="match status" value="1"/>
</dbReference>
<dbReference type="Pfam" id="PF00238">
    <property type="entry name" value="Ribosomal_L14"/>
    <property type="match status" value="1"/>
</dbReference>
<dbReference type="SMART" id="SM01374">
    <property type="entry name" value="Ribosomal_L14"/>
    <property type="match status" value="1"/>
</dbReference>
<dbReference type="SUPFAM" id="SSF50193">
    <property type="entry name" value="Ribosomal protein L14"/>
    <property type="match status" value="1"/>
</dbReference>
<sequence>MIQQETYLTVADNSGAKRLQCIRVLGSNRRYAHVGDVVVASVKDALPNMGVKKSDVVKAVIVRTRHTLRRNTGNSIRFDDNAAVLINEDKNPKGTRVFGPVARELRDKNFTKIVSLAPEVI</sequence>
<accession>A2BYS6</accession>
<keyword id="KW-0687">Ribonucleoprotein</keyword>
<keyword id="KW-0689">Ribosomal protein</keyword>
<keyword id="KW-0694">RNA-binding</keyword>
<keyword id="KW-0699">rRNA-binding</keyword>
<evidence type="ECO:0000255" key="1">
    <source>
        <dbReference type="HAMAP-Rule" id="MF_01367"/>
    </source>
</evidence>
<evidence type="ECO:0000305" key="2"/>